<keyword id="KW-0963">Cytoplasm</keyword>
<keyword id="KW-1185">Reference proteome</keyword>
<keyword id="KW-0808">Transferase</keyword>
<accession>B4EY24</accession>
<feature type="chain" id="PRO_1000136254" description="L-carnitine CoA-transferase">
    <location>
        <begin position="1"/>
        <end position="406"/>
    </location>
</feature>
<feature type="active site" description="Nucleophile" evidence="1">
    <location>
        <position position="170"/>
    </location>
</feature>
<feature type="binding site" evidence="1">
    <location>
        <position position="98"/>
    </location>
    <ligand>
        <name>CoA</name>
        <dbReference type="ChEBI" id="CHEBI:57287"/>
    </ligand>
</feature>
<feature type="binding site" evidence="1">
    <location>
        <position position="105"/>
    </location>
    <ligand>
        <name>CoA</name>
        <dbReference type="ChEBI" id="CHEBI:57287"/>
    </ligand>
</feature>
<evidence type="ECO:0000255" key="1">
    <source>
        <dbReference type="HAMAP-Rule" id="MF_01050"/>
    </source>
</evidence>
<name>CAIB_PROMH</name>
<sequence length="406" mass="45383">MTEHLPMPQFGPLAGVRVVFSGIEIAGPFAGQMFAEWGAEVIWIENVAWADTIRVQPHYPQLSRRNLHALSLNIFKEEGRDAFLKLMETTDIFIEASKGPAFARRGITDEVLWEHNPKLVIAHLSGFGQYGDPQYTNLPAYNTIAQAFSGYLIQNGDKDQPMPAFPYTADYFSGMTATTSALAALYKVQQTGKGESIDIAMYEVMLRMGQYFMMDYFNGGEICPRMTKGKDPYYAGCGLYRCQDGYIVMEVVGITQIEEIFKDIGLAHLLGTPEVPKGTQLIHRINCPHGQLFEDKLDEWLANQPITAVLKRLSELNIASAKVLTIPELEGNPQYVARESITQWKTMSGETCKGPNIMPKFKNNPGKIWRGMPAHGMDTNAILKNIGYSDEQIRELVDKGLAKIVE</sequence>
<proteinExistence type="inferred from homology"/>
<organism>
    <name type="scientific">Proteus mirabilis (strain HI4320)</name>
    <dbReference type="NCBI Taxonomy" id="529507"/>
    <lineage>
        <taxon>Bacteria</taxon>
        <taxon>Pseudomonadati</taxon>
        <taxon>Pseudomonadota</taxon>
        <taxon>Gammaproteobacteria</taxon>
        <taxon>Enterobacterales</taxon>
        <taxon>Morganellaceae</taxon>
        <taxon>Proteus</taxon>
    </lineage>
</organism>
<protein>
    <recommendedName>
        <fullName evidence="1">L-carnitine CoA-transferase</fullName>
        <ecNumber evidence="1">2.8.3.21</ecNumber>
    </recommendedName>
    <alternativeName>
        <fullName evidence="1">Crotonobetainyl-CoA:carnitine CoA-transferase</fullName>
    </alternativeName>
</protein>
<dbReference type="EC" id="2.8.3.21" evidence="1"/>
<dbReference type="EMBL" id="AM942759">
    <property type="protein sequence ID" value="CAR45234.1"/>
    <property type="molecule type" value="Genomic_DNA"/>
</dbReference>
<dbReference type="RefSeq" id="WP_012368454.1">
    <property type="nucleotide sequence ID" value="NC_010554.1"/>
</dbReference>
<dbReference type="SMR" id="B4EY24"/>
<dbReference type="EnsemblBacteria" id="CAR45234">
    <property type="protein sequence ID" value="CAR45234"/>
    <property type="gene ID" value="PMI2656"/>
</dbReference>
<dbReference type="GeneID" id="6799994"/>
<dbReference type="KEGG" id="pmr:PMI2656"/>
<dbReference type="PATRIC" id="fig|529507.6.peg.2584"/>
<dbReference type="eggNOG" id="COG1804">
    <property type="taxonomic scope" value="Bacteria"/>
</dbReference>
<dbReference type="HOGENOM" id="CLU_033975_2_0_6"/>
<dbReference type="UniPathway" id="UPA00117"/>
<dbReference type="Proteomes" id="UP000008319">
    <property type="component" value="Chromosome"/>
</dbReference>
<dbReference type="GO" id="GO:0005737">
    <property type="term" value="C:cytoplasm"/>
    <property type="evidence" value="ECO:0007669"/>
    <property type="project" value="UniProtKB-SubCell"/>
</dbReference>
<dbReference type="GO" id="GO:0008735">
    <property type="term" value="F:L-carnitine CoA-transferase activity"/>
    <property type="evidence" value="ECO:0007669"/>
    <property type="project" value="RHEA"/>
</dbReference>
<dbReference type="GO" id="GO:0009437">
    <property type="term" value="P:carnitine metabolic process"/>
    <property type="evidence" value="ECO:0007669"/>
    <property type="project" value="UniProtKB-UniRule"/>
</dbReference>
<dbReference type="Gene3D" id="3.40.50.10540">
    <property type="entry name" value="Crotonobetainyl-coa:carnitine coa-transferase, domain 1"/>
    <property type="match status" value="1"/>
</dbReference>
<dbReference type="Gene3D" id="3.30.1540.10">
    <property type="entry name" value="formyl-coa transferase, domain 3"/>
    <property type="match status" value="1"/>
</dbReference>
<dbReference type="HAMAP" id="MF_01050">
    <property type="entry name" value="CaiB"/>
    <property type="match status" value="1"/>
</dbReference>
<dbReference type="InterPro" id="IPR050509">
    <property type="entry name" value="CoA-transferase_III"/>
</dbReference>
<dbReference type="InterPro" id="IPR023452">
    <property type="entry name" value="CoA-Trfase_CaiB"/>
</dbReference>
<dbReference type="InterPro" id="IPR003673">
    <property type="entry name" value="CoA-Trfase_fam_III"/>
</dbReference>
<dbReference type="InterPro" id="IPR044855">
    <property type="entry name" value="CoA-Trfase_III_dom3_sf"/>
</dbReference>
<dbReference type="InterPro" id="IPR023606">
    <property type="entry name" value="CoA-Trfase_III_dom_1_sf"/>
</dbReference>
<dbReference type="NCBIfam" id="NF002914">
    <property type="entry name" value="PRK03525.1"/>
    <property type="match status" value="1"/>
</dbReference>
<dbReference type="PANTHER" id="PTHR48228:SF6">
    <property type="entry name" value="L-CARNITINE COA-TRANSFERASE"/>
    <property type="match status" value="1"/>
</dbReference>
<dbReference type="PANTHER" id="PTHR48228">
    <property type="entry name" value="SUCCINYL-COA--D-CITRAMALATE COA-TRANSFERASE"/>
    <property type="match status" value="1"/>
</dbReference>
<dbReference type="Pfam" id="PF02515">
    <property type="entry name" value="CoA_transf_3"/>
    <property type="match status" value="1"/>
</dbReference>
<dbReference type="SUPFAM" id="SSF89796">
    <property type="entry name" value="CoA-transferase family III (CaiB/BaiF)"/>
    <property type="match status" value="1"/>
</dbReference>
<comment type="function">
    <text evidence="1">Catalyzes the reversible transfer of the CoA moiety from gamma-butyrobetainyl-CoA to L-carnitine to generate L-carnitinyl-CoA and gamma-butyrobetaine. Is also able to catalyze the reversible transfer of the CoA moiety from gamma-butyrobetainyl-CoA or L-carnitinyl-CoA to crotonobetaine to generate crotonobetainyl-CoA.</text>
</comment>
<comment type="catalytic activity">
    <reaction evidence="1">
        <text>crotonobetainyl-CoA + (R)-carnitine = crotonobetaine + (R)-carnitinyl-CoA</text>
        <dbReference type="Rhea" id="RHEA:28526"/>
        <dbReference type="ChEBI" id="CHEBI:16347"/>
        <dbReference type="ChEBI" id="CHEBI:17237"/>
        <dbReference type="ChEBI" id="CHEBI:60932"/>
        <dbReference type="ChEBI" id="CHEBI:60933"/>
        <dbReference type="EC" id="2.8.3.21"/>
    </reaction>
</comment>
<comment type="catalytic activity">
    <reaction evidence="1">
        <text>4-(trimethylamino)butanoyl-CoA + (R)-carnitine = (R)-carnitinyl-CoA + 4-(trimethylamino)butanoate</text>
        <dbReference type="Rhea" id="RHEA:28418"/>
        <dbReference type="ChEBI" id="CHEBI:16244"/>
        <dbReference type="ChEBI" id="CHEBI:16347"/>
        <dbReference type="ChEBI" id="CHEBI:60932"/>
        <dbReference type="ChEBI" id="CHEBI:61513"/>
        <dbReference type="EC" id="2.8.3.21"/>
    </reaction>
</comment>
<comment type="pathway">
    <text evidence="1">Amine and polyamine metabolism; carnitine metabolism.</text>
</comment>
<comment type="subunit">
    <text evidence="1">Homodimer.</text>
</comment>
<comment type="subcellular location">
    <subcellularLocation>
        <location evidence="1">Cytoplasm</location>
    </subcellularLocation>
</comment>
<comment type="similarity">
    <text evidence="1">Belongs to the CoA-transferase III family. CaiB subfamily.</text>
</comment>
<gene>
    <name evidence="1" type="primary">caiB</name>
    <name type="ordered locus">PMI2656</name>
</gene>
<reference key="1">
    <citation type="journal article" date="2008" name="J. Bacteriol.">
        <title>Complete genome sequence of uropathogenic Proteus mirabilis, a master of both adherence and motility.</title>
        <authorList>
            <person name="Pearson M.M."/>
            <person name="Sebaihia M."/>
            <person name="Churcher C."/>
            <person name="Quail M.A."/>
            <person name="Seshasayee A.S."/>
            <person name="Luscombe N.M."/>
            <person name="Abdellah Z."/>
            <person name="Arrosmith C."/>
            <person name="Atkin B."/>
            <person name="Chillingworth T."/>
            <person name="Hauser H."/>
            <person name="Jagels K."/>
            <person name="Moule S."/>
            <person name="Mungall K."/>
            <person name="Norbertczak H."/>
            <person name="Rabbinowitsch E."/>
            <person name="Walker D."/>
            <person name="Whithead S."/>
            <person name="Thomson N.R."/>
            <person name="Rather P.N."/>
            <person name="Parkhill J."/>
            <person name="Mobley H.L.T."/>
        </authorList>
    </citation>
    <scope>NUCLEOTIDE SEQUENCE [LARGE SCALE GENOMIC DNA]</scope>
    <source>
        <strain>HI4320</strain>
    </source>
</reference>